<dbReference type="EC" id="2.7.7.6" evidence="1"/>
<dbReference type="EMBL" id="CP001614">
    <property type="protein sequence ID" value="ACR14281.1"/>
    <property type="molecule type" value="Genomic_DNA"/>
</dbReference>
<dbReference type="RefSeq" id="WP_015820397.1">
    <property type="nucleotide sequence ID" value="NC_012997.1"/>
</dbReference>
<dbReference type="SMR" id="C5BQ39"/>
<dbReference type="STRING" id="377629.TERTU_0883"/>
<dbReference type="KEGG" id="ttu:TERTU_0883"/>
<dbReference type="eggNOG" id="COG0085">
    <property type="taxonomic scope" value="Bacteria"/>
</dbReference>
<dbReference type="HOGENOM" id="CLU_000524_4_3_6"/>
<dbReference type="OrthoDB" id="9803954at2"/>
<dbReference type="Proteomes" id="UP000009080">
    <property type="component" value="Chromosome"/>
</dbReference>
<dbReference type="GO" id="GO:0000428">
    <property type="term" value="C:DNA-directed RNA polymerase complex"/>
    <property type="evidence" value="ECO:0007669"/>
    <property type="project" value="UniProtKB-KW"/>
</dbReference>
<dbReference type="GO" id="GO:0003677">
    <property type="term" value="F:DNA binding"/>
    <property type="evidence" value="ECO:0007669"/>
    <property type="project" value="UniProtKB-UniRule"/>
</dbReference>
<dbReference type="GO" id="GO:0003899">
    <property type="term" value="F:DNA-directed RNA polymerase activity"/>
    <property type="evidence" value="ECO:0007669"/>
    <property type="project" value="UniProtKB-UniRule"/>
</dbReference>
<dbReference type="GO" id="GO:0032549">
    <property type="term" value="F:ribonucleoside binding"/>
    <property type="evidence" value="ECO:0007669"/>
    <property type="project" value="InterPro"/>
</dbReference>
<dbReference type="GO" id="GO:0006351">
    <property type="term" value="P:DNA-templated transcription"/>
    <property type="evidence" value="ECO:0007669"/>
    <property type="project" value="UniProtKB-UniRule"/>
</dbReference>
<dbReference type="CDD" id="cd00653">
    <property type="entry name" value="RNA_pol_B_RPB2"/>
    <property type="match status" value="1"/>
</dbReference>
<dbReference type="FunFam" id="2.40.270.10:FF:000003">
    <property type="entry name" value="DNA-directed RNA polymerase subunit beta"/>
    <property type="match status" value="1"/>
</dbReference>
<dbReference type="FunFam" id="2.40.50.100:FF:000006">
    <property type="entry name" value="DNA-directed RNA polymerase subunit beta"/>
    <property type="match status" value="1"/>
</dbReference>
<dbReference type="FunFam" id="2.40.50.150:FF:000001">
    <property type="entry name" value="DNA-directed RNA polymerase subunit beta"/>
    <property type="match status" value="1"/>
</dbReference>
<dbReference type="FunFam" id="3.90.1110.10:FF:000001">
    <property type="entry name" value="DNA-directed RNA polymerase subunit beta"/>
    <property type="match status" value="1"/>
</dbReference>
<dbReference type="FunFam" id="3.90.1110.10:FF:000004">
    <property type="entry name" value="DNA-directed RNA polymerase subunit beta"/>
    <property type="match status" value="1"/>
</dbReference>
<dbReference type="FunFam" id="3.90.1800.10:FF:000001">
    <property type="entry name" value="DNA-directed RNA polymerase subunit beta"/>
    <property type="match status" value="1"/>
</dbReference>
<dbReference type="Gene3D" id="2.40.50.100">
    <property type="match status" value="1"/>
</dbReference>
<dbReference type="Gene3D" id="2.40.50.150">
    <property type="match status" value="1"/>
</dbReference>
<dbReference type="Gene3D" id="3.90.1100.10">
    <property type="match status" value="2"/>
</dbReference>
<dbReference type="Gene3D" id="6.10.140.1670">
    <property type="match status" value="1"/>
</dbReference>
<dbReference type="Gene3D" id="2.30.150.10">
    <property type="entry name" value="DNA-directed RNA polymerase, beta subunit, external 1 domain"/>
    <property type="match status" value="1"/>
</dbReference>
<dbReference type="Gene3D" id="2.40.270.10">
    <property type="entry name" value="DNA-directed RNA polymerase, subunit 2, domain 6"/>
    <property type="match status" value="1"/>
</dbReference>
<dbReference type="Gene3D" id="3.90.1800.10">
    <property type="entry name" value="RNA polymerase alpha subunit dimerisation domain"/>
    <property type="match status" value="1"/>
</dbReference>
<dbReference type="Gene3D" id="3.90.1110.10">
    <property type="entry name" value="RNA polymerase Rpb2, domain 2"/>
    <property type="match status" value="1"/>
</dbReference>
<dbReference type="HAMAP" id="MF_01321">
    <property type="entry name" value="RNApol_bact_RpoB"/>
    <property type="match status" value="1"/>
</dbReference>
<dbReference type="InterPro" id="IPR042107">
    <property type="entry name" value="DNA-dir_RNA_pol_bsu_ext_1_sf"/>
</dbReference>
<dbReference type="InterPro" id="IPR019462">
    <property type="entry name" value="DNA-dir_RNA_pol_bsu_external_1"/>
</dbReference>
<dbReference type="InterPro" id="IPR015712">
    <property type="entry name" value="DNA-dir_RNA_pol_su2"/>
</dbReference>
<dbReference type="InterPro" id="IPR007120">
    <property type="entry name" value="DNA-dir_RNAP_su2_dom"/>
</dbReference>
<dbReference type="InterPro" id="IPR037033">
    <property type="entry name" value="DNA-dir_RNAP_su2_hyb_sf"/>
</dbReference>
<dbReference type="InterPro" id="IPR010243">
    <property type="entry name" value="RNA_pol_bsu_bac"/>
</dbReference>
<dbReference type="InterPro" id="IPR007121">
    <property type="entry name" value="RNA_pol_bsu_CS"/>
</dbReference>
<dbReference type="InterPro" id="IPR007644">
    <property type="entry name" value="RNA_pol_bsu_protrusion"/>
</dbReference>
<dbReference type="InterPro" id="IPR007642">
    <property type="entry name" value="RNA_pol_Rpb2_2"/>
</dbReference>
<dbReference type="InterPro" id="IPR037034">
    <property type="entry name" value="RNA_pol_Rpb2_2_sf"/>
</dbReference>
<dbReference type="InterPro" id="IPR007645">
    <property type="entry name" value="RNA_pol_Rpb2_3"/>
</dbReference>
<dbReference type="InterPro" id="IPR007641">
    <property type="entry name" value="RNA_pol_Rpb2_7"/>
</dbReference>
<dbReference type="InterPro" id="IPR014724">
    <property type="entry name" value="RNA_pol_RPB2_OB-fold"/>
</dbReference>
<dbReference type="NCBIfam" id="NF001616">
    <property type="entry name" value="PRK00405.1"/>
    <property type="match status" value="1"/>
</dbReference>
<dbReference type="NCBIfam" id="TIGR02013">
    <property type="entry name" value="rpoB"/>
    <property type="match status" value="1"/>
</dbReference>
<dbReference type="PANTHER" id="PTHR20856">
    <property type="entry name" value="DNA-DIRECTED RNA POLYMERASE I SUBUNIT 2"/>
    <property type="match status" value="1"/>
</dbReference>
<dbReference type="Pfam" id="PF04563">
    <property type="entry name" value="RNA_pol_Rpb2_1"/>
    <property type="match status" value="1"/>
</dbReference>
<dbReference type="Pfam" id="PF04561">
    <property type="entry name" value="RNA_pol_Rpb2_2"/>
    <property type="match status" value="2"/>
</dbReference>
<dbReference type="Pfam" id="PF04565">
    <property type="entry name" value="RNA_pol_Rpb2_3"/>
    <property type="match status" value="1"/>
</dbReference>
<dbReference type="Pfam" id="PF10385">
    <property type="entry name" value="RNA_pol_Rpb2_45"/>
    <property type="match status" value="1"/>
</dbReference>
<dbReference type="Pfam" id="PF00562">
    <property type="entry name" value="RNA_pol_Rpb2_6"/>
    <property type="match status" value="1"/>
</dbReference>
<dbReference type="Pfam" id="PF04560">
    <property type="entry name" value="RNA_pol_Rpb2_7"/>
    <property type="match status" value="1"/>
</dbReference>
<dbReference type="SUPFAM" id="SSF64484">
    <property type="entry name" value="beta and beta-prime subunits of DNA dependent RNA-polymerase"/>
    <property type="match status" value="1"/>
</dbReference>
<dbReference type="PROSITE" id="PS01166">
    <property type="entry name" value="RNA_POL_BETA"/>
    <property type="match status" value="1"/>
</dbReference>
<feature type="chain" id="PRO_1000214489" description="DNA-directed RNA polymerase subunit beta">
    <location>
        <begin position="1"/>
        <end position="1360"/>
    </location>
</feature>
<keyword id="KW-0240">DNA-directed RNA polymerase</keyword>
<keyword id="KW-0548">Nucleotidyltransferase</keyword>
<keyword id="KW-1185">Reference proteome</keyword>
<keyword id="KW-0804">Transcription</keyword>
<keyword id="KW-0808">Transferase</keyword>
<evidence type="ECO:0000255" key="1">
    <source>
        <dbReference type="HAMAP-Rule" id="MF_01321"/>
    </source>
</evidence>
<comment type="function">
    <text evidence="1">DNA-dependent RNA polymerase catalyzes the transcription of DNA into RNA using the four ribonucleoside triphosphates as substrates.</text>
</comment>
<comment type="catalytic activity">
    <reaction evidence="1">
        <text>RNA(n) + a ribonucleoside 5'-triphosphate = RNA(n+1) + diphosphate</text>
        <dbReference type="Rhea" id="RHEA:21248"/>
        <dbReference type="Rhea" id="RHEA-COMP:14527"/>
        <dbReference type="Rhea" id="RHEA-COMP:17342"/>
        <dbReference type="ChEBI" id="CHEBI:33019"/>
        <dbReference type="ChEBI" id="CHEBI:61557"/>
        <dbReference type="ChEBI" id="CHEBI:140395"/>
        <dbReference type="EC" id="2.7.7.6"/>
    </reaction>
</comment>
<comment type="subunit">
    <text evidence="1">The RNAP catalytic core consists of 2 alpha, 1 beta, 1 beta' and 1 omega subunit. When a sigma factor is associated with the core the holoenzyme is formed, which can initiate transcription.</text>
</comment>
<comment type="similarity">
    <text evidence="1">Belongs to the RNA polymerase beta chain family.</text>
</comment>
<name>RPOB_TERTT</name>
<sequence length="1360" mass="151313">MAYSYTEKKRIRKDFGKLPNVMEVPYLLAIQLDSYRKFTQADRPADERLDIGLQAAFKSVFPIVSYSGNAALEYVSYALGKPVFDVSECVLRGATYAVPLRVKVRLIIYDRESSSKAIKDIKEQEVYMGEIPLMTDNGTFVINGTERVIVSQLHRSPGVFFEHDKGKTHSSGKLLYSARVIPYRGSWLDFEFDPKDLVYVRIDRRRKLPATILLRALGYSAEEMLDMFFETSRVFLAEDNIKLELVPSRLRGEVTTFEIKDADGNVIVEDGRRITARHIRQLEKSNVTELQVPAEYVLGKALANNVIDTNTGEVLFECNSEITEEVLEGLRSANVSEFQILYTNDLDCGPFLSDTLRTDPTRTELEALVEIYRMMRPGEPPTKESAEGLFQNLFFSNERYDLSAVGRMKFNRRLGRDEETGEGTLSREDIVDVLRTLISIRNGQGTVDDIDHLGNRRVRSVGEMAENQFRVGLVRVERAVKERLSMAESEGLMPQDLINAKPVAAAVKEFFGSSQLSQFMDQNNPLSEITHKRRVSALGPGGLTRERAGFEVRDVHPTHYGRVCPIETPEGPNIGLINSLATYARTNNYGFLESPHRKVVDGKVTDEIEYLSAINESQYVIAQASAATDGEGRLTDDLVSVRYQNEFTLKAAADVQYMDVSPRQVVSVAASLIPFLEHDDANRALMGSNMQRQAVPTLKADKPVVGTGMERNVARDSGVCVVAKRGGKIESVDAGRIVVRVADEETPAGDAGVDIYNLIKYTRSNQNTCINQRPIVGPGDSISRGDILADGPSVDLGELALGQNMRIAFMTWNGYNFEDSILVSERVVQEDRFTTIHIQELTCIARDTKLGSEEITADIPNVGEGALAKLDESGIVYVGAEVGAGDILVGKVTPKGETQLTPEEKLLRAIFGEKASDVKDTSLRVPSSVKGTVIDVQVFTRDGLEKDQRSLDIEKAQLDQVRKDLNEEYRIVEGATFARLRSSLVGNLASSGKGVKKGEAVTDEMLNAIDRDDWFKVRMADDALNEQLDLAEQQLVERRKELDERFEDKKRKLATGDDLAPGVLKIVKVYLAIKRRIQPGDKMAGRHGNKGVISVIMPVEDMPYDENGEPIDIVLNPLGVPSRMNVGQILETHLGLASKGLGRKIDNMVKQQREIAELRKFLGEIYNEIGQGYKIEDLDSFSDEEILELARNLRGGVPMATRAFDGAAESEIKALLKLADLPESGQMSLFDGRTGDAFMRPVTVGYMYMLKLNHLVDDKMHARSTGSYSLVTQQPLGGKAQFGGQRFGEMEVWALEAYGAAYTLQEMLTVKSDDVNGRTKMYKNIVDGDHRMEPGMPESFNVLVKEIRSLGINIELEQDS</sequence>
<accession>C5BQ39</accession>
<gene>
    <name evidence="1" type="primary">rpoB</name>
    <name type="ordered locus">TERTU_0883</name>
</gene>
<organism>
    <name type="scientific">Teredinibacter turnerae (strain ATCC 39867 / T7901)</name>
    <dbReference type="NCBI Taxonomy" id="377629"/>
    <lineage>
        <taxon>Bacteria</taxon>
        <taxon>Pseudomonadati</taxon>
        <taxon>Pseudomonadota</taxon>
        <taxon>Gammaproteobacteria</taxon>
        <taxon>Cellvibrionales</taxon>
        <taxon>Cellvibrionaceae</taxon>
        <taxon>Teredinibacter</taxon>
    </lineage>
</organism>
<proteinExistence type="inferred from homology"/>
<protein>
    <recommendedName>
        <fullName evidence="1">DNA-directed RNA polymerase subunit beta</fullName>
        <shortName evidence="1">RNAP subunit beta</shortName>
        <ecNumber evidence="1">2.7.7.6</ecNumber>
    </recommendedName>
    <alternativeName>
        <fullName evidence="1">RNA polymerase subunit beta</fullName>
    </alternativeName>
    <alternativeName>
        <fullName evidence="1">Transcriptase subunit beta</fullName>
    </alternativeName>
</protein>
<reference key="1">
    <citation type="journal article" date="2009" name="PLoS ONE">
        <title>The complete genome of Teredinibacter turnerae T7901: an intracellular endosymbiont of marine wood-boring bivalves (shipworms).</title>
        <authorList>
            <person name="Yang J.C."/>
            <person name="Madupu R."/>
            <person name="Durkin A.S."/>
            <person name="Ekborg N.A."/>
            <person name="Pedamallu C.S."/>
            <person name="Hostetler J.B."/>
            <person name="Radune D."/>
            <person name="Toms B.S."/>
            <person name="Henrissat B."/>
            <person name="Coutinho P.M."/>
            <person name="Schwarz S."/>
            <person name="Field L."/>
            <person name="Trindade-Silva A.E."/>
            <person name="Soares C.A.G."/>
            <person name="Elshahawi S."/>
            <person name="Hanora A."/>
            <person name="Schmidt E.W."/>
            <person name="Haygood M.G."/>
            <person name="Posfai J."/>
            <person name="Benner J."/>
            <person name="Madinger C."/>
            <person name="Nove J."/>
            <person name="Anton B."/>
            <person name="Chaudhary K."/>
            <person name="Foster J."/>
            <person name="Holman A."/>
            <person name="Kumar S."/>
            <person name="Lessard P.A."/>
            <person name="Luyten Y.A."/>
            <person name="Slatko B."/>
            <person name="Wood N."/>
            <person name="Wu B."/>
            <person name="Teplitski M."/>
            <person name="Mougous J.D."/>
            <person name="Ward N."/>
            <person name="Eisen J.A."/>
            <person name="Badger J.H."/>
            <person name="Distel D.L."/>
        </authorList>
    </citation>
    <scope>NUCLEOTIDE SEQUENCE [LARGE SCALE GENOMIC DNA]</scope>
    <source>
        <strain>ATCC 39867 / T7901</strain>
    </source>
</reference>